<protein>
    <recommendedName>
        <fullName>Thioredoxin</fullName>
        <shortName>Trx</shortName>
    </recommendedName>
</protein>
<organism>
    <name type="scientific">Acidithiobacillus ferridurans</name>
    <dbReference type="NCBI Taxonomy" id="1232575"/>
    <lineage>
        <taxon>Bacteria</taxon>
        <taxon>Pseudomonadati</taxon>
        <taxon>Pseudomonadota</taxon>
        <taxon>Acidithiobacillia</taxon>
        <taxon>Acidithiobacillales</taxon>
        <taxon>Acidithiobacillaceae</taxon>
        <taxon>Acidithiobacillus</taxon>
    </lineage>
</organism>
<keyword id="KW-1015">Disulfide bond</keyword>
<keyword id="KW-0249">Electron transport</keyword>
<keyword id="KW-0676">Redox-active center</keyword>
<keyword id="KW-0813">Transport</keyword>
<comment type="function">
    <text>Component of the thioredoxin-thioredoxin reductase system. Participates in various redox reactions through the reversible oxidation of its active center dithiol to a disulfide and catalyzes dithiol-disulfide exchange reactions.</text>
</comment>
<comment type="similarity">
    <text evidence="2">Belongs to the thioredoxin family.</text>
</comment>
<evidence type="ECO:0000255" key="1">
    <source>
        <dbReference type="PROSITE-ProRule" id="PRU00691"/>
    </source>
</evidence>
<evidence type="ECO:0000305" key="2"/>
<feature type="chain" id="PRO_0000120142" description="Thioredoxin">
    <location>
        <begin position="1"/>
        <end position="108"/>
    </location>
</feature>
<feature type="domain" description="Thioredoxin" evidence="1">
    <location>
        <begin position="2"/>
        <end position="108"/>
    </location>
</feature>
<feature type="disulfide bond" description="Redox-active" evidence="1">
    <location>
        <begin position="33"/>
        <end position="36"/>
    </location>
</feature>
<gene>
    <name type="primary">trxA</name>
</gene>
<dbReference type="EMBL" id="U20361">
    <property type="protein sequence ID" value="AAA88939.1"/>
    <property type="molecule type" value="Genomic_DNA"/>
</dbReference>
<dbReference type="SMR" id="P52233"/>
<dbReference type="GO" id="GO:0005829">
    <property type="term" value="C:cytosol"/>
    <property type="evidence" value="ECO:0007669"/>
    <property type="project" value="TreeGrafter"/>
</dbReference>
<dbReference type="GO" id="GO:0015035">
    <property type="term" value="F:protein-disulfide reductase activity"/>
    <property type="evidence" value="ECO:0007669"/>
    <property type="project" value="InterPro"/>
</dbReference>
<dbReference type="GO" id="GO:0045454">
    <property type="term" value="P:cell redox homeostasis"/>
    <property type="evidence" value="ECO:0007669"/>
    <property type="project" value="TreeGrafter"/>
</dbReference>
<dbReference type="CDD" id="cd02947">
    <property type="entry name" value="TRX_family"/>
    <property type="match status" value="1"/>
</dbReference>
<dbReference type="FunFam" id="3.40.30.10:FF:000001">
    <property type="entry name" value="Thioredoxin"/>
    <property type="match status" value="1"/>
</dbReference>
<dbReference type="Gene3D" id="3.40.30.10">
    <property type="entry name" value="Glutaredoxin"/>
    <property type="match status" value="1"/>
</dbReference>
<dbReference type="InterPro" id="IPR005746">
    <property type="entry name" value="Thioredoxin"/>
</dbReference>
<dbReference type="InterPro" id="IPR036249">
    <property type="entry name" value="Thioredoxin-like_sf"/>
</dbReference>
<dbReference type="InterPro" id="IPR017937">
    <property type="entry name" value="Thioredoxin_CS"/>
</dbReference>
<dbReference type="InterPro" id="IPR013766">
    <property type="entry name" value="Thioredoxin_domain"/>
</dbReference>
<dbReference type="NCBIfam" id="NF006898">
    <property type="entry name" value="PRK09381.1"/>
    <property type="match status" value="1"/>
</dbReference>
<dbReference type="NCBIfam" id="TIGR01068">
    <property type="entry name" value="thioredoxin"/>
    <property type="match status" value="1"/>
</dbReference>
<dbReference type="PANTHER" id="PTHR45663">
    <property type="entry name" value="GEO12009P1"/>
    <property type="match status" value="1"/>
</dbReference>
<dbReference type="PANTHER" id="PTHR45663:SF11">
    <property type="entry name" value="GEO12009P1"/>
    <property type="match status" value="1"/>
</dbReference>
<dbReference type="Pfam" id="PF00085">
    <property type="entry name" value="Thioredoxin"/>
    <property type="match status" value="1"/>
</dbReference>
<dbReference type="PIRSF" id="PIRSF000077">
    <property type="entry name" value="Thioredoxin"/>
    <property type="match status" value="1"/>
</dbReference>
<dbReference type="PRINTS" id="PR00421">
    <property type="entry name" value="THIOREDOXIN"/>
</dbReference>
<dbReference type="SUPFAM" id="SSF52833">
    <property type="entry name" value="Thioredoxin-like"/>
    <property type="match status" value="1"/>
</dbReference>
<dbReference type="PROSITE" id="PS00194">
    <property type="entry name" value="THIOREDOXIN_1"/>
    <property type="match status" value="1"/>
</dbReference>
<dbReference type="PROSITE" id="PS51352">
    <property type="entry name" value="THIOREDOXIN_2"/>
    <property type="match status" value="1"/>
</dbReference>
<reference key="1">
    <citation type="journal article" date="1995" name="Microbiology">
        <title>Molecular genetic analysis of a thioredoxin gene from Thiobacillus ferrooxidans.</title>
        <authorList>
            <person name="Powles R.E."/>
            <person name="Deane S.M."/>
            <person name="Rawlings D.E."/>
        </authorList>
    </citation>
    <scope>NUCLEOTIDE SEQUENCE [GENOMIC DNA]</scope>
    <source>
        <strain>ATCC 33020 / DSM 29468 / JCM 18981 / 11Fe</strain>
    </source>
</reference>
<proteinExistence type="inferred from homology"/>
<sequence length="108" mass="11979">MSDAILYVSDDSFETDVLKSSKPVLVDFWAEWCGPCKMIAPILEEIADEYADRLRVAKFNIDENPNTPPQYAIRGIPTLLLFKAGKLEATKVGALSKAQLTAFLDSQL</sequence>
<accession>P52233</accession>
<name>THIO_ACIFI</name>